<protein>
    <recommendedName>
        <fullName evidence="1">Ribonuclease P protein component</fullName>
        <shortName evidence="1">RNase P protein</shortName>
        <shortName evidence="1">RNaseP protein</shortName>
        <ecNumber evidence="1">3.1.26.5</ecNumber>
    </recommendedName>
    <alternativeName>
        <fullName evidence="1">Protein C5</fullName>
    </alternativeName>
</protein>
<gene>
    <name evidence="1" type="primary">rnpA</name>
    <name type="ordered locus">UU603</name>
</gene>
<comment type="function">
    <text evidence="1">RNaseP catalyzes the removal of the 5'-leader sequence from pre-tRNA to produce the mature 5'-terminus. It can also cleave other RNA substrates such as 4.5S RNA. The protein component plays an auxiliary but essential role in vivo by binding to the 5'-leader sequence and broadening the substrate specificity of the ribozyme.</text>
</comment>
<comment type="catalytic activity">
    <reaction evidence="1">
        <text>Endonucleolytic cleavage of RNA, removing 5'-extranucleotides from tRNA precursor.</text>
        <dbReference type="EC" id="3.1.26.5"/>
    </reaction>
</comment>
<comment type="subunit">
    <text evidence="1">Consists of a catalytic RNA component (M1 or rnpB) and a protein subunit.</text>
</comment>
<comment type="similarity">
    <text evidence="1">Belongs to the RnpA family.</text>
</comment>
<reference key="1">
    <citation type="journal article" date="2000" name="Nature">
        <title>The complete sequence of the mucosal pathogen Ureaplasma urealyticum.</title>
        <authorList>
            <person name="Glass J.I."/>
            <person name="Lefkowitz E.J."/>
            <person name="Glass J.S."/>
            <person name="Heiner C.R."/>
            <person name="Chen E.Y."/>
            <person name="Cassell G.H."/>
        </authorList>
    </citation>
    <scope>NUCLEOTIDE SEQUENCE [LARGE SCALE GENOMIC DNA]</scope>
    <source>
        <strain>ATCC 700970</strain>
    </source>
</reference>
<sequence>MANFISLKKNEDILDTIKKQQKIHSNQIVVYFRKTNLKNVRLAISISKKKFKLATQRNRIRRLIKAWFIAADIPIKSYDIVVLVKPSFIDGSFVLNCNNLKIILQRIINKEKR</sequence>
<feature type="chain" id="PRO_0000198561" description="Ribonuclease P protein component">
    <location>
        <begin position="1"/>
        <end position="113"/>
    </location>
</feature>
<proteinExistence type="inferred from homology"/>
<evidence type="ECO:0000255" key="1">
    <source>
        <dbReference type="HAMAP-Rule" id="MF_00227"/>
    </source>
</evidence>
<keyword id="KW-0255">Endonuclease</keyword>
<keyword id="KW-0378">Hydrolase</keyword>
<keyword id="KW-0540">Nuclease</keyword>
<keyword id="KW-1185">Reference proteome</keyword>
<keyword id="KW-0694">RNA-binding</keyword>
<keyword id="KW-0819">tRNA processing</keyword>
<accession>Q9PPN6</accession>
<name>RNPA_UREPA</name>
<dbReference type="EC" id="3.1.26.5" evidence="1"/>
<dbReference type="EMBL" id="AF222894">
    <property type="protein sequence ID" value="AAF31017.1"/>
    <property type="molecule type" value="Genomic_DNA"/>
</dbReference>
<dbReference type="RefSeq" id="WP_006688777.1">
    <property type="nucleotide sequence ID" value="NC_002162.1"/>
</dbReference>
<dbReference type="SMR" id="Q9PPN6"/>
<dbReference type="STRING" id="273119.UU603"/>
<dbReference type="EnsemblBacteria" id="AAF31017">
    <property type="protein sequence ID" value="AAF31017"/>
    <property type="gene ID" value="UU603"/>
</dbReference>
<dbReference type="GeneID" id="29672643"/>
<dbReference type="KEGG" id="uur:UU603"/>
<dbReference type="eggNOG" id="COG0594">
    <property type="taxonomic scope" value="Bacteria"/>
</dbReference>
<dbReference type="HOGENOM" id="CLU_117179_9_4_14"/>
<dbReference type="OrthoDB" id="9796422at2"/>
<dbReference type="BRENDA" id="3.1.26.5">
    <property type="organism ID" value="9209"/>
</dbReference>
<dbReference type="Proteomes" id="UP000000423">
    <property type="component" value="Chromosome"/>
</dbReference>
<dbReference type="GO" id="GO:0030677">
    <property type="term" value="C:ribonuclease P complex"/>
    <property type="evidence" value="ECO:0007669"/>
    <property type="project" value="TreeGrafter"/>
</dbReference>
<dbReference type="GO" id="GO:0042781">
    <property type="term" value="F:3'-tRNA processing endoribonuclease activity"/>
    <property type="evidence" value="ECO:0007669"/>
    <property type="project" value="TreeGrafter"/>
</dbReference>
<dbReference type="GO" id="GO:0004526">
    <property type="term" value="F:ribonuclease P activity"/>
    <property type="evidence" value="ECO:0007669"/>
    <property type="project" value="UniProtKB-UniRule"/>
</dbReference>
<dbReference type="GO" id="GO:0000049">
    <property type="term" value="F:tRNA binding"/>
    <property type="evidence" value="ECO:0007669"/>
    <property type="project" value="UniProtKB-UniRule"/>
</dbReference>
<dbReference type="GO" id="GO:0001682">
    <property type="term" value="P:tRNA 5'-leader removal"/>
    <property type="evidence" value="ECO:0007669"/>
    <property type="project" value="UniProtKB-UniRule"/>
</dbReference>
<dbReference type="Gene3D" id="3.30.230.10">
    <property type="match status" value="1"/>
</dbReference>
<dbReference type="HAMAP" id="MF_00227">
    <property type="entry name" value="RNase_P"/>
    <property type="match status" value="1"/>
</dbReference>
<dbReference type="InterPro" id="IPR020568">
    <property type="entry name" value="Ribosomal_Su5_D2-typ_SF"/>
</dbReference>
<dbReference type="InterPro" id="IPR014721">
    <property type="entry name" value="Ribsml_uS5_D2-typ_fold_subgr"/>
</dbReference>
<dbReference type="InterPro" id="IPR000100">
    <property type="entry name" value="RNase_P"/>
</dbReference>
<dbReference type="InterPro" id="IPR020539">
    <property type="entry name" value="RNase_P_CS"/>
</dbReference>
<dbReference type="NCBIfam" id="TIGR00188">
    <property type="entry name" value="rnpA"/>
    <property type="match status" value="1"/>
</dbReference>
<dbReference type="PANTHER" id="PTHR33992">
    <property type="entry name" value="RIBONUCLEASE P PROTEIN COMPONENT"/>
    <property type="match status" value="1"/>
</dbReference>
<dbReference type="PANTHER" id="PTHR33992:SF1">
    <property type="entry name" value="RIBONUCLEASE P PROTEIN COMPONENT"/>
    <property type="match status" value="1"/>
</dbReference>
<dbReference type="Pfam" id="PF00825">
    <property type="entry name" value="Ribonuclease_P"/>
    <property type="match status" value="1"/>
</dbReference>
<dbReference type="SUPFAM" id="SSF54211">
    <property type="entry name" value="Ribosomal protein S5 domain 2-like"/>
    <property type="match status" value="1"/>
</dbReference>
<dbReference type="PROSITE" id="PS00648">
    <property type="entry name" value="RIBONUCLEASE_P"/>
    <property type="match status" value="1"/>
</dbReference>
<organism>
    <name type="scientific">Ureaplasma parvum serovar 3 (strain ATCC 700970)</name>
    <dbReference type="NCBI Taxonomy" id="273119"/>
    <lineage>
        <taxon>Bacteria</taxon>
        <taxon>Bacillati</taxon>
        <taxon>Mycoplasmatota</taxon>
        <taxon>Mycoplasmoidales</taxon>
        <taxon>Mycoplasmoidaceae</taxon>
        <taxon>Ureaplasma</taxon>
    </lineage>
</organism>